<dbReference type="EC" id="3.6.5.n1" evidence="1"/>
<dbReference type="EMBL" id="AE000512">
    <property type="protein sequence ID" value="AAD36690.1"/>
    <property type="molecule type" value="Genomic_DNA"/>
</dbReference>
<dbReference type="PIR" id="A72233">
    <property type="entry name" value="A72233"/>
</dbReference>
<dbReference type="RefSeq" id="NP_229423.1">
    <property type="nucleotide sequence ID" value="NC_000853.1"/>
</dbReference>
<dbReference type="SMR" id="Q9X1V8"/>
<dbReference type="FunCoup" id="Q9X1V8">
    <property type="interactions" value="348"/>
</dbReference>
<dbReference type="STRING" id="243274.TM_1623"/>
<dbReference type="PaxDb" id="243274-THEMA_06130"/>
<dbReference type="EnsemblBacteria" id="AAD36690">
    <property type="protein sequence ID" value="AAD36690"/>
    <property type="gene ID" value="TM_1623"/>
</dbReference>
<dbReference type="KEGG" id="tma:TM1623"/>
<dbReference type="PATRIC" id="fig|243274.5.peg.1642"/>
<dbReference type="eggNOG" id="COG0481">
    <property type="taxonomic scope" value="Bacteria"/>
</dbReference>
<dbReference type="InParanoid" id="Q9X1V8"/>
<dbReference type="OrthoDB" id="9804431at2"/>
<dbReference type="Proteomes" id="UP000008183">
    <property type="component" value="Chromosome"/>
</dbReference>
<dbReference type="GO" id="GO:0005886">
    <property type="term" value="C:plasma membrane"/>
    <property type="evidence" value="ECO:0007669"/>
    <property type="project" value="UniProtKB-SubCell"/>
</dbReference>
<dbReference type="GO" id="GO:0005525">
    <property type="term" value="F:GTP binding"/>
    <property type="evidence" value="ECO:0007669"/>
    <property type="project" value="UniProtKB-UniRule"/>
</dbReference>
<dbReference type="GO" id="GO:0003924">
    <property type="term" value="F:GTPase activity"/>
    <property type="evidence" value="ECO:0007669"/>
    <property type="project" value="UniProtKB-UniRule"/>
</dbReference>
<dbReference type="GO" id="GO:0043022">
    <property type="term" value="F:ribosome binding"/>
    <property type="evidence" value="ECO:0000318"/>
    <property type="project" value="GO_Central"/>
</dbReference>
<dbReference type="GO" id="GO:0003746">
    <property type="term" value="F:translation elongation factor activity"/>
    <property type="evidence" value="ECO:0007669"/>
    <property type="project" value="UniProtKB-UniRule"/>
</dbReference>
<dbReference type="GO" id="GO:0045727">
    <property type="term" value="P:positive regulation of translation"/>
    <property type="evidence" value="ECO:0000318"/>
    <property type="project" value="GO_Central"/>
</dbReference>
<dbReference type="CDD" id="cd03699">
    <property type="entry name" value="EF4_II"/>
    <property type="match status" value="1"/>
</dbReference>
<dbReference type="CDD" id="cd16260">
    <property type="entry name" value="EF4_III"/>
    <property type="match status" value="1"/>
</dbReference>
<dbReference type="CDD" id="cd01890">
    <property type="entry name" value="LepA"/>
    <property type="match status" value="1"/>
</dbReference>
<dbReference type="CDD" id="cd03709">
    <property type="entry name" value="lepA_C"/>
    <property type="match status" value="1"/>
</dbReference>
<dbReference type="FunFam" id="3.40.50.300:FF:000078">
    <property type="entry name" value="Elongation factor 4"/>
    <property type="match status" value="1"/>
</dbReference>
<dbReference type="FunFam" id="2.40.30.10:FF:000015">
    <property type="entry name" value="Translation factor GUF1, mitochondrial"/>
    <property type="match status" value="1"/>
</dbReference>
<dbReference type="FunFam" id="3.30.70.240:FF:000007">
    <property type="entry name" value="Translation factor GUF1, mitochondrial"/>
    <property type="match status" value="1"/>
</dbReference>
<dbReference type="FunFam" id="3.30.70.2570:FF:000001">
    <property type="entry name" value="Translation factor GUF1, mitochondrial"/>
    <property type="match status" value="1"/>
</dbReference>
<dbReference type="FunFam" id="3.30.70.870:FF:000004">
    <property type="entry name" value="Translation factor GUF1, mitochondrial"/>
    <property type="match status" value="1"/>
</dbReference>
<dbReference type="Gene3D" id="3.30.70.240">
    <property type="match status" value="1"/>
</dbReference>
<dbReference type="Gene3D" id="3.30.70.2570">
    <property type="entry name" value="Elongation factor 4, C-terminal domain"/>
    <property type="match status" value="1"/>
</dbReference>
<dbReference type="Gene3D" id="3.30.70.870">
    <property type="entry name" value="Elongation Factor G (Translational Gtpase), domain 3"/>
    <property type="match status" value="1"/>
</dbReference>
<dbReference type="Gene3D" id="3.40.50.300">
    <property type="entry name" value="P-loop containing nucleotide triphosphate hydrolases"/>
    <property type="match status" value="1"/>
</dbReference>
<dbReference type="Gene3D" id="2.40.30.10">
    <property type="entry name" value="Translation factors"/>
    <property type="match status" value="1"/>
</dbReference>
<dbReference type="HAMAP" id="MF_00071">
    <property type="entry name" value="LepA"/>
    <property type="match status" value="1"/>
</dbReference>
<dbReference type="InterPro" id="IPR006297">
    <property type="entry name" value="EF-4"/>
</dbReference>
<dbReference type="InterPro" id="IPR035647">
    <property type="entry name" value="EFG_III/V"/>
</dbReference>
<dbReference type="InterPro" id="IPR000640">
    <property type="entry name" value="EFG_V-like"/>
</dbReference>
<dbReference type="InterPro" id="IPR004161">
    <property type="entry name" value="EFTu-like_2"/>
</dbReference>
<dbReference type="InterPro" id="IPR038363">
    <property type="entry name" value="LepA_C_sf"/>
</dbReference>
<dbReference type="InterPro" id="IPR013842">
    <property type="entry name" value="LepA_CTD"/>
</dbReference>
<dbReference type="InterPro" id="IPR035654">
    <property type="entry name" value="LepA_IV"/>
</dbReference>
<dbReference type="InterPro" id="IPR027417">
    <property type="entry name" value="P-loop_NTPase"/>
</dbReference>
<dbReference type="InterPro" id="IPR005225">
    <property type="entry name" value="Small_GTP-bd"/>
</dbReference>
<dbReference type="InterPro" id="IPR000795">
    <property type="entry name" value="T_Tr_GTP-bd_dom"/>
</dbReference>
<dbReference type="InterPro" id="IPR009000">
    <property type="entry name" value="Transl_B-barrel_sf"/>
</dbReference>
<dbReference type="NCBIfam" id="TIGR01393">
    <property type="entry name" value="lepA"/>
    <property type="match status" value="1"/>
</dbReference>
<dbReference type="NCBIfam" id="TIGR00231">
    <property type="entry name" value="small_GTP"/>
    <property type="match status" value="1"/>
</dbReference>
<dbReference type="PANTHER" id="PTHR43512:SF4">
    <property type="entry name" value="TRANSLATION FACTOR GUF1 HOMOLOG, CHLOROPLASTIC"/>
    <property type="match status" value="1"/>
</dbReference>
<dbReference type="PANTHER" id="PTHR43512">
    <property type="entry name" value="TRANSLATION FACTOR GUF1-RELATED"/>
    <property type="match status" value="1"/>
</dbReference>
<dbReference type="Pfam" id="PF00679">
    <property type="entry name" value="EFG_C"/>
    <property type="match status" value="1"/>
</dbReference>
<dbReference type="Pfam" id="PF00009">
    <property type="entry name" value="GTP_EFTU"/>
    <property type="match status" value="1"/>
</dbReference>
<dbReference type="Pfam" id="PF03144">
    <property type="entry name" value="GTP_EFTU_D2"/>
    <property type="match status" value="1"/>
</dbReference>
<dbReference type="Pfam" id="PF06421">
    <property type="entry name" value="LepA_C"/>
    <property type="match status" value="1"/>
</dbReference>
<dbReference type="PRINTS" id="PR00315">
    <property type="entry name" value="ELONGATNFCT"/>
</dbReference>
<dbReference type="SUPFAM" id="SSF54980">
    <property type="entry name" value="EF-G C-terminal domain-like"/>
    <property type="match status" value="2"/>
</dbReference>
<dbReference type="SUPFAM" id="SSF52540">
    <property type="entry name" value="P-loop containing nucleoside triphosphate hydrolases"/>
    <property type="match status" value="1"/>
</dbReference>
<dbReference type="SUPFAM" id="SSF50447">
    <property type="entry name" value="Translation proteins"/>
    <property type="match status" value="1"/>
</dbReference>
<dbReference type="PROSITE" id="PS51722">
    <property type="entry name" value="G_TR_2"/>
    <property type="match status" value="1"/>
</dbReference>
<evidence type="ECO:0000255" key="1">
    <source>
        <dbReference type="HAMAP-Rule" id="MF_00071"/>
    </source>
</evidence>
<name>LEPA_THEMA</name>
<sequence>MVKFKREVNFSGGDRGVYRPDLIRNICIIAHIDHGKTTLVDRILEITNTVDRRKMREQYLDMMDIERERGITIKAQPVKVMYTAEDGNTYEINIIDTPGHVDFSYEVGRSMAACEGAILLVDATQGVEAQTVAHTYLAIEHDLEIIPVINKIDLPNANIEETALEIKDLLGVSENEILLVSAKEGTGVKELLEAIVKRVPPPKGDINGKLKALIFDAKYDNYKGVIVHVRLFDGQVKPGDKIMTFSNKKVYEVQEVGVFLPEMEPVDSLSAGEVGYIIAGIKEVSDARVGDTITSANDPVDEALPGYREIKPMVFAGMFPGLPEYYEELRKALEKLKLNDSALYFEPTMSPAMGFGFRCGFLGPLHMEVVRERIEREFDLAVILTAPNVRYRVKLRNGEEIEITDPSKFPDEGEILEAYEPYVDLSIITPSEYIGAIINLVQNEKRGELRITENAGKNRVILRFDAPLAEIIYDFFDRMKAVSRGYASMDYEFKEYRRSDLVKVTILVNKEPVDALSFIVHRSKAYQMARKIVEKLKDLIPRHQFQIPIQAKAGGRIIARADIKALRKDVLAKCYGGDVTRKMKLLEKQKEGKKKLREIGRVTIPQEAFLALLKIGGEDEK</sequence>
<keyword id="KW-0997">Cell inner membrane</keyword>
<keyword id="KW-1003">Cell membrane</keyword>
<keyword id="KW-0342">GTP-binding</keyword>
<keyword id="KW-0378">Hydrolase</keyword>
<keyword id="KW-0472">Membrane</keyword>
<keyword id="KW-0547">Nucleotide-binding</keyword>
<keyword id="KW-0648">Protein biosynthesis</keyword>
<keyword id="KW-1185">Reference proteome</keyword>
<feature type="chain" id="PRO_0000176362" description="Elongation factor 4">
    <location>
        <begin position="1"/>
        <end position="621"/>
    </location>
</feature>
<feature type="domain" description="tr-type G">
    <location>
        <begin position="21"/>
        <end position="203"/>
    </location>
</feature>
<feature type="binding site" evidence="1">
    <location>
        <begin position="33"/>
        <end position="38"/>
    </location>
    <ligand>
        <name>GTP</name>
        <dbReference type="ChEBI" id="CHEBI:37565"/>
    </ligand>
</feature>
<feature type="binding site" evidence="1">
    <location>
        <begin position="150"/>
        <end position="153"/>
    </location>
    <ligand>
        <name>GTP</name>
        <dbReference type="ChEBI" id="CHEBI:37565"/>
    </ligand>
</feature>
<proteinExistence type="inferred from homology"/>
<comment type="function">
    <text evidence="1">Required for accurate and efficient protein synthesis under certain stress conditions. May act as a fidelity factor of the translation reaction, by catalyzing a one-codon backward translocation of tRNAs on improperly translocated ribosomes. Back-translocation proceeds from a post-translocation (POST) complex to a pre-translocation (PRE) complex, thus giving elongation factor G a second chance to translocate the tRNAs correctly. Binds to ribosomes in a GTP-dependent manner.</text>
</comment>
<comment type="catalytic activity">
    <reaction evidence="1">
        <text>GTP + H2O = GDP + phosphate + H(+)</text>
        <dbReference type="Rhea" id="RHEA:19669"/>
        <dbReference type="ChEBI" id="CHEBI:15377"/>
        <dbReference type="ChEBI" id="CHEBI:15378"/>
        <dbReference type="ChEBI" id="CHEBI:37565"/>
        <dbReference type="ChEBI" id="CHEBI:43474"/>
        <dbReference type="ChEBI" id="CHEBI:58189"/>
        <dbReference type="EC" id="3.6.5.n1"/>
    </reaction>
</comment>
<comment type="subcellular location">
    <subcellularLocation>
        <location evidence="1">Cell inner membrane</location>
        <topology evidence="1">Peripheral membrane protein</topology>
        <orientation evidence="1">Cytoplasmic side</orientation>
    </subcellularLocation>
</comment>
<comment type="similarity">
    <text evidence="1">Belongs to the TRAFAC class translation factor GTPase superfamily. Classic translation factor GTPase family. LepA subfamily.</text>
</comment>
<protein>
    <recommendedName>
        <fullName evidence="1">Elongation factor 4</fullName>
        <shortName evidence="1">EF-4</shortName>
        <ecNumber evidence="1">3.6.5.n1</ecNumber>
    </recommendedName>
    <alternativeName>
        <fullName evidence="1">Ribosomal back-translocase LepA</fullName>
    </alternativeName>
</protein>
<reference key="1">
    <citation type="journal article" date="1999" name="Nature">
        <title>Evidence for lateral gene transfer between Archaea and Bacteria from genome sequence of Thermotoga maritima.</title>
        <authorList>
            <person name="Nelson K.E."/>
            <person name="Clayton R.A."/>
            <person name="Gill S.R."/>
            <person name="Gwinn M.L."/>
            <person name="Dodson R.J."/>
            <person name="Haft D.H."/>
            <person name="Hickey E.K."/>
            <person name="Peterson J.D."/>
            <person name="Nelson W.C."/>
            <person name="Ketchum K.A."/>
            <person name="McDonald L.A."/>
            <person name="Utterback T.R."/>
            <person name="Malek J.A."/>
            <person name="Linher K.D."/>
            <person name="Garrett M.M."/>
            <person name="Stewart A.M."/>
            <person name="Cotton M.D."/>
            <person name="Pratt M.S."/>
            <person name="Phillips C.A."/>
            <person name="Richardson D.L."/>
            <person name="Heidelberg J.F."/>
            <person name="Sutton G.G."/>
            <person name="Fleischmann R.D."/>
            <person name="Eisen J.A."/>
            <person name="White O."/>
            <person name="Salzberg S.L."/>
            <person name="Smith H.O."/>
            <person name="Venter J.C."/>
            <person name="Fraser C.M."/>
        </authorList>
    </citation>
    <scope>NUCLEOTIDE SEQUENCE [LARGE SCALE GENOMIC DNA]</scope>
    <source>
        <strain>ATCC 43589 / DSM 3109 / JCM 10099 / NBRC 100826 / MSB8</strain>
    </source>
</reference>
<organism>
    <name type="scientific">Thermotoga maritima (strain ATCC 43589 / DSM 3109 / JCM 10099 / NBRC 100826 / MSB8)</name>
    <dbReference type="NCBI Taxonomy" id="243274"/>
    <lineage>
        <taxon>Bacteria</taxon>
        <taxon>Thermotogati</taxon>
        <taxon>Thermotogota</taxon>
        <taxon>Thermotogae</taxon>
        <taxon>Thermotogales</taxon>
        <taxon>Thermotogaceae</taxon>
        <taxon>Thermotoga</taxon>
    </lineage>
</organism>
<gene>
    <name evidence="1" type="primary">lepA</name>
    <name type="ordered locus">TM_1623</name>
</gene>
<accession>Q9X1V8</accession>